<sequence>MTDAEIENSPASDLKELNLENEGVEQQDQAKADESDPVESKKKKNKKKKKKKSNVKKIELLFPDGKYPEGAWMDYHQDFNLQRTTDEESRYLKRDLERAEHWNDVRKGAEIHRRVRRAIKDRIVPGMKLMDIADMIENTTRKYTGAENLLAMEDPKSQGIGFPTGLSLNHCAAHFTPNAGDKTVLKYEDVMKVDYGVQVNGNIIDSAFTVSFDPQYDNLLAAVKDATYTGIKEAGIDVRLTDIGEAIQEVMESYEVEINGETYQVKPCRNLCGHSIAPYRIHGGKSVPIVKNGDTTKMEEGEHFAIETFGSTGRGYVTAGGEVSHYARSAEDHQVMPTLDSAKNLLKTIDRNFGTLPFCRRYLDRLGQEKYLFALNNLVRHGLVQDYPPLNDIPGSYTAQFEHTILLHAHKKEVVSKGDDY</sequence>
<accession>C7GSF3</accession>
<organism>
    <name type="scientific">Saccharomyces cerevisiae (strain JAY291)</name>
    <name type="common">Baker's yeast</name>
    <dbReference type="NCBI Taxonomy" id="574961"/>
    <lineage>
        <taxon>Eukaryota</taxon>
        <taxon>Fungi</taxon>
        <taxon>Dikarya</taxon>
        <taxon>Ascomycota</taxon>
        <taxon>Saccharomycotina</taxon>
        <taxon>Saccharomycetes</taxon>
        <taxon>Saccharomycetales</taxon>
        <taxon>Saccharomycetaceae</taxon>
        <taxon>Saccharomyces</taxon>
    </lineage>
</organism>
<reference key="1">
    <citation type="journal article" date="2009" name="Genome Res.">
        <title>Genome structure of a Saccharomyces cerevisiae strain widely used in bioethanol production.</title>
        <authorList>
            <person name="Argueso J.L."/>
            <person name="Carazzolle M.F."/>
            <person name="Mieczkowski P.A."/>
            <person name="Duarte F.M."/>
            <person name="Netto O.V.C."/>
            <person name="Missawa S.K."/>
            <person name="Galzerani F."/>
            <person name="Costa G.G.L."/>
            <person name="Vidal R.O."/>
            <person name="Noronha M.F."/>
            <person name="Dominska M."/>
            <person name="Andrietta M.G.S."/>
            <person name="Andrietta S.R."/>
            <person name="Cunha A.F."/>
            <person name="Gomes L.H."/>
            <person name="Tavares F.C.A."/>
            <person name="Alcarde A.R."/>
            <person name="Dietrich F.S."/>
            <person name="McCusker J.H."/>
            <person name="Petes T.D."/>
            <person name="Pereira G.A.G."/>
        </authorList>
    </citation>
    <scope>NUCLEOTIDE SEQUENCE [LARGE SCALE GENOMIC DNA]</scope>
    <source>
        <strain>JAY291</strain>
    </source>
</reference>
<comment type="function">
    <text evidence="2">Cotranslationally removes the N-terminal methionine from nascent proteins. The N-terminal methionine is often cleaved when the second residue in the primary sequence is small and uncharged (Met-Ala-, Cys, Gly, Pro, Ser, Thr, or Val).</text>
</comment>
<comment type="catalytic activity">
    <reaction evidence="2">
        <text>Release of N-terminal amino acids, preferentially methionine, from peptides and arylamides.</text>
        <dbReference type="EC" id="3.4.11.18"/>
    </reaction>
</comment>
<comment type="cofactor">
    <cofactor evidence="2">
        <name>Co(2+)</name>
        <dbReference type="ChEBI" id="CHEBI:48828"/>
    </cofactor>
    <cofactor evidence="2">
        <name>Zn(2+)</name>
        <dbReference type="ChEBI" id="CHEBI:29105"/>
    </cofactor>
    <cofactor evidence="2">
        <name>Mn(2+)</name>
        <dbReference type="ChEBI" id="CHEBI:29035"/>
    </cofactor>
    <cofactor evidence="2">
        <name>Fe(2+)</name>
        <dbReference type="ChEBI" id="CHEBI:29033"/>
    </cofactor>
    <text evidence="2">Binds 2 divalent metal cations per subunit. Has a high-affinity and a low affinity metal-binding site. The true nature of the physiological cofactor is under debate. The enzyme is active with cobalt, zinc, manganese or divalent iron ions. Most likely, methionine aminopeptidases function as mononuclear Fe(2+)-metalloproteases under physiological conditions, and the catalytically relevant metal-binding site has been assigned to the histidine-containing high-affinity site.</text>
</comment>
<comment type="subcellular location">
    <subcellularLocation>
        <location evidence="2">Cytoplasm</location>
    </subcellularLocation>
</comment>
<comment type="similarity">
    <text evidence="2">Belongs to the peptidase M24A family. Methionine aminopeptidase eukaryotic type 2 subfamily.</text>
</comment>
<feature type="chain" id="PRO_0000407675" description="Methionine aminopeptidase 2">
    <location>
        <begin position="1"/>
        <end position="421"/>
    </location>
</feature>
<feature type="region of interest" description="Disordered" evidence="3">
    <location>
        <begin position="1"/>
        <end position="53"/>
    </location>
</feature>
<feature type="compositionally biased region" description="Basic and acidic residues" evidence="3">
    <location>
        <begin position="28"/>
        <end position="40"/>
    </location>
</feature>
<feature type="compositionally biased region" description="Basic residues" evidence="3">
    <location>
        <begin position="41"/>
        <end position="53"/>
    </location>
</feature>
<feature type="binding site" evidence="2">
    <location>
        <position position="174"/>
    </location>
    <ligand>
        <name>substrate</name>
    </ligand>
</feature>
<feature type="binding site" evidence="2">
    <location>
        <position position="194"/>
    </location>
    <ligand>
        <name>a divalent metal cation</name>
        <dbReference type="ChEBI" id="CHEBI:60240"/>
        <label>1</label>
    </ligand>
</feature>
<feature type="binding site" evidence="2">
    <location>
        <position position="205"/>
    </location>
    <ligand>
        <name>a divalent metal cation</name>
        <dbReference type="ChEBI" id="CHEBI:60240"/>
        <label>1</label>
    </ligand>
</feature>
<feature type="binding site" evidence="2">
    <location>
        <position position="205"/>
    </location>
    <ligand>
        <name>a divalent metal cation</name>
        <dbReference type="ChEBI" id="CHEBI:60240"/>
        <label>2</label>
        <note>catalytic</note>
    </ligand>
</feature>
<feature type="binding site" evidence="2">
    <location>
        <position position="274"/>
    </location>
    <ligand>
        <name>a divalent metal cation</name>
        <dbReference type="ChEBI" id="CHEBI:60240"/>
        <label>2</label>
        <note>catalytic</note>
    </ligand>
</feature>
<feature type="binding site" evidence="2">
    <location>
        <position position="282"/>
    </location>
    <ligand>
        <name>substrate</name>
    </ligand>
</feature>
<feature type="binding site" evidence="2">
    <location>
        <position position="307"/>
    </location>
    <ligand>
        <name>a divalent metal cation</name>
        <dbReference type="ChEBI" id="CHEBI:60240"/>
        <label>2</label>
        <note>catalytic</note>
    </ligand>
</feature>
<feature type="binding site" evidence="2">
    <location>
        <position position="402"/>
    </location>
    <ligand>
        <name>a divalent metal cation</name>
        <dbReference type="ChEBI" id="CHEBI:60240"/>
        <label>1</label>
    </ligand>
</feature>
<feature type="binding site" evidence="2">
    <location>
        <position position="402"/>
    </location>
    <ligand>
        <name>a divalent metal cation</name>
        <dbReference type="ChEBI" id="CHEBI:60240"/>
        <label>2</label>
        <note>catalytic</note>
    </ligand>
</feature>
<feature type="modified residue" description="Phosphoserine" evidence="1">
    <location>
        <position position="35"/>
    </location>
</feature>
<protein>
    <recommendedName>
        <fullName evidence="2">Methionine aminopeptidase 2</fullName>
        <shortName evidence="2">MAP 2</shortName>
        <shortName evidence="2">MetAP 2</shortName>
        <ecNumber evidence="2">3.4.11.18</ecNumber>
    </recommendedName>
    <alternativeName>
        <fullName evidence="2">Peptidase M</fullName>
    </alternativeName>
</protein>
<dbReference type="EC" id="3.4.11.18" evidence="2"/>
<dbReference type="EMBL" id="ACFL01000184">
    <property type="protein sequence ID" value="EEU06282.1"/>
    <property type="molecule type" value="Genomic_DNA"/>
</dbReference>
<dbReference type="SMR" id="C7GSF3"/>
<dbReference type="Proteomes" id="UP000008073">
    <property type="component" value="Unassembled WGS sequence"/>
</dbReference>
<dbReference type="GO" id="GO:0005737">
    <property type="term" value="C:cytoplasm"/>
    <property type="evidence" value="ECO:0007669"/>
    <property type="project" value="UniProtKB-SubCell"/>
</dbReference>
<dbReference type="GO" id="GO:0004239">
    <property type="term" value="F:initiator methionyl aminopeptidase activity"/>
    <property type="evidence" value="ECO:0007669"/>
    <property type="project" value="UniProtKB-UniRule"/>
</dbReference>
<dbReference type="GO" id="GO:0046872">
    <property type="term" value="F:metal ion binding"/>
    <property type="evidence" value="ECO:0007669"/>
    <property type="project" value="UniProtKB-UniRule"/>
</dbReference>
<dbReference type="GO" id="GO:0070006">
    <property type="term" value="F:metalloaminopeptidase activity"/>
    <property type="evidence" value="ECO:0007669"/>
    <property type="project" value="UniProtKB-UniRule"/>
</dbReference>
<dbReference type="GO" id="GO:0006508">
    <property type="term" value="P:proteolysis"/>
    <property type="evidence" value="ECO:0007669"/>
    <property type="project" value="UniProtKB-KW"/>
</dbReference>
<dbReference type="CDD" id="cd01088">
    <property type="entry name" value="MetAP2"/>
    <property type="match status" value="1"/>
</dbReference>
<dbReference type="FunFam" id="1.10.10.10:FF:000370">
    <property type="entry name" value="Methionine aminopeptidase 2"/>
    <property type="match status" value="1"/>
</dbReference>
<dbReference type="Gene3D" id="3.90.230.10">
    <property type="entry name" value="Creatinase/methionine aminopeptidase superfamily"/>
    <property type="match status" value="1"/>
</dbReference>
<dbReference type="Gene3D" id="1.10.10.10">
    <property type="entry name" value="Winged helix-like DNA-binding domain superfamily/Winged helix DNA-binding domain"/>
    <property type="match status" value="1"/>
</dbReference>
<dbReference type="HAMAP" id="MF_03175">
    <property type="entry name" value="MetAP_2_euk"/>
    <property type="match status" value="1"/>
</dbReference>
<dbReference type="InterPro" id="IPR036005">
    <property type="entry name" value="Creatinase/aminopeptidase-like"/>
</dbReference>
<dbReference type="InterPro" id="IPR050247">
    <property type="entry name" value="Met_Aminopeptidase_Type2"/>
</dbReference>
<dbReference type="InterPro" id="IPR000994">
    <property type="entry name" value="Pept_M24"/>
</dbReference>
<dbReference type="InterPro" id="IPR001714">
    <property type="entry name" value="Pept_M24_MAP"/>
</dbReference>
<dbReference type="InterPro" id="IPR002468">
    <property type="entry name" value="Pept_M24A_MAP2"/>
</dbReference>
<dbReference type="InterPro" id="IPR018349">
    <property type="entry name" value="Pept_M24A_MAP2_BS"/>
</dbReference>
<dbReference type="InterPro" id="IPR036388">
    <property type="entry name" value="WH-like_DNA-bd_sf"/>
</dbReference>
<dbReference type="InterPro" id="IPR036390">
    <property type="entry name" value="WH_DNA-bd_sf"/>
</dbReference>
<dbReference type="NCBIfam" id="TIGR00501">
    <property type="entry name" value="met_pdase_II"/>
    <property type="match status" value="1"/>
</dbReference>
<dbReference type="PANTHER" id="PTHR45777">
    <property type="entry name" value="METHIONINE AMINOPEPTIDASE 2"/>
    <property type="match status" value="1"/>
</dbReference>
<dbReference type="PANTHER" id="PTHR45777:SF2">
    <property type="entry name" value="METHIONINE AMINOPEPTIDASE 2"/>
    <property type="match status" value="1"/>
</dbReference>
<dbReference type="Pfam" id="PF00557">
    <property type="entry name" value="Peptidase_M24"/>
    <property type="match status" value="1"/>
</dbReference>
<dbReference type="PRINTS" id="PR00599">
    <property type="entry name" value="MAPEPTIDASE"/>
</dbReference>
<dbReference type="SUPFAM" id="SSF55920">
    <property type="entry name" value="Creatinase/aminopeptidase"/>
    <property type="match status" value="1"/>
</dbReference>
<dbReference type="SUPFAM" id="SSF46785">
    <property type="entry name" value="Winged helix' DNA-binding domain"/>
    <property type="match status" value="1"/>
</dbReference>
<dbReference type="PROSITE" id="PS01202">
    <property type="entry name" value="MAP_2"/>
    <property type="match status" value="1"/>
</dbReference>
<keyword id="KW-0031">Aminopeptidase</keyword>
<keyword id="KW-0963">Cytoplasm</keyword>
<keyword id="KW-0378">Hydrolase</keyword>
<keyword id="KW-0479">Metal-binding</keyword>
<keyword id="KW-0597">Phosphoprotein</keyword>
<keyword id="KW-0645">Protease</keyword>
<gene>
    <name evidence="2" type="primary">MAP2</name>
    <name type="ORF">C1Q_03312</name>
</gene>
<evidence type="ECO:0000250" key="1">
    <source>
        <dbReference type="UniProtKB" id="P38174"/>
    </source>
</evidence>
<evidence type="ECO:0000255" key="2">
    <source>
        <dbReference type="HAMAP-Rule" id="MF_03175"/>
    </source>
</evidence>
<evidence type="ECO:0000256" key="3">
    <source>
        <dbReference type="SAM" id="MobiDB-lite"/>
    </source>
</evidence>
<proteinExistence type="inferred from homology"/>
<name>MAP2_YEAS2</name>